<comment type="function">
    <text evidence="1">Could be involved in the degradation of the Pseudomonas aeruginosa quorum sensing signal molecule HHQ (2-heptyl-4-quinolone) to anthranilic acid. May catalyze the hydroxylation of HHQ to PQS (2-heptyl-3-hydroxy-4-quinolone).</text>
</comment>
<comment type="catalytic activity">
    <reaction evidence="4">
        <text>2-heptyl-4(1H)-quinolone + NADH + O2 + H(+) = 2-heptyl-3-hydroxy-4(1H)-quinolone + NAD(+) + H2O</text>
        <dbReference type="Rhea" id="RHEA:37871"/>
        <dbReference type="ChEBI" id="CHEBI:15377"/>
        <dbReference type="ChEBI" id="CHEBI:15378"/>
        <dbReference type="ChEBI" id="CHEBI:15379"/>
        <dbReference type="ChEBI" id="CHEBI:29472"/>
        <dbReference type="ChEBI" id="CHEBI:57540"/>
        <dbReference type="ChEBI" id="CHEBI:57945"/>
        <dbReference type="ChEBI" id="CHEBI:62219"/>
        <dbReference type="EC" id="1.14.13.182"/>
    </reaction>
    <physiologicalReaction direction="left-to-right" evidence="4">
        <dbReference type="Rhea" id="RHEA:37872"/>
    </physiologicalReaction>
</comment>
<comment type="induction">
    <text evidence="1">Up-regulated by PQS.</text>
</comment>
<comment type="similarity">
    <text evidence="3">Belongs to the 3-hydroxybenzoate 6-hydroxylase family.</text>
</comment>
<feature type="chain" id="PRO_0000447581" description="Putative 2-heptyl-3-hydroxy-4(1H)-quinolone synthase AqdB1">
    <location>
        <begin position="1"/>
        <end position="381"/>
    </location>
</feature>
<name>AQDB1_RHOER</name>
<dbReference type="EC" id="1.14.13.182" evidence="4"/>
<dbReference type="EMBL" id="CP011296">
    <property type="protein sequence ID" value="AKE01129.1"/>
    <property type="molecule type" value="Genomic_DNA"/>
</dbReference>
<dbReference type="RefSeq" id="WP_046380172.1">
    <property type="nucleotide sequence ID" value="NZ_CP011296.1"/>
</dbReference>
<dbReference type="SMR" id="A0A0E4AFG7"/>
<dbReference type="KEGG" id="reb:XU06_29635"/>
<dbReference type="PATRIC" id="fig|1833.80.peg.6102"/>
<dbReference type="GO" id="GO:0102164">
    <property type="term" value="F:2-heptyl-3-hydroxy-4(1H)-quinolone synthase activity"/>
    <property type="evidence" value="ECO:0007669"/>
    <property type="project" value="UniProtKB-EC"/>
</dbReference>
<dbReference type="GO" id="GO:0071949">
    <property type="term" value="F:FAD binding"/>
    <property type="evidence" value="ECO:0007669"/>
    <property type="project" value="InterPro"/>
</dbReference>
<dbReference type="Gene3D" id="3.30.9.10">
    <property type="entry name" value="D-Amino Acid Oxidase, subunit A, domain 2"/>
    <property type="match status" value="1"/>
</dbReference>
<dbReference type="Gene3D" id="3.50.50.60">
    <property type="entry name" value="FAD/NAD(P)-binding domain"/>
    <property type="match status" value="1"/>
</dbReference>
<dbReference type="InterPro" id="IPR002938">
    <property type="entry name" value="FAD-bd"/>
</dbReference>
<dbReference type="InterPro" id="IPR050493">
    <property type="entry name" value="FAD-dep_Monooxygenase_BioMet"/>
</dbReference>
<dbReference type="InterPro" id="IPR036188">
    <property type="entry name" value="FAD/NAD-bd_sf"/>
</dbReference>
<dbReference type="PANTHER" id="PTHR13789">
    <property type="entry name" value="MONOOXYGENASE"/>
    <property type="match status" value="1"/>
</dbReference>
<dbReference type="PANTHER" id="PTHR13789:SF309">
    <property type="entry name" value="PUTATIVE (AFU_ORTHOLOGUE AFUA_6G14510)-RELATED"/>
    <property type="match status" value="1"/>
</dbReference>
<dbReference type="Pfam" id="PF01494">
    <property type="entry name" value="FAD_binding_3"/>
    <property type="match status" value="1"/>
</dbReference>
<dbReference type="PRINTS" id="PR00420">
    <property type="entry name" value="RNGMNOXGNASE"/>
</dbReference>
<dbReference type="SUPFAM" id="SSF51905">
    <property type="entry name" value="FAD/NAD(P)-binding domain"/>
    <property type="match status" value="1"/>
</dbReference>
<reference key="1">
    <citation type="journal article" date="2015" name="J. Biotechnol.">
        <title>Complete genome sequence of Rhodococcus erythropolis BG43 (DSM 46869), a degrader of Pseudomonas aeruginosa quorum sensing signal molecules.</title>
        <authorList>
            <person name="Rueckert C."/>
            <person name="Birmes F.S."/>
            <person name="Mueller C."/>
            <person name="Niewerth H."/>
            <person name="Winkler A."/>
            <person name="Fetzner S."/>
            <person name="Kalinowski J."/>
        </authorList>
    </citation>
    <scope>NUCLEOTIDE SEQUENCE [LARGE SCALE GENOMIC DNA]</scope>
    <source>
        <strain>DSM 46869 / BG43</strain>
    </source>
</reference>
<reference key="2">
    <citation type="journal article" date="2015" name="Appl. Environ. Microbiol.">
        <title>Rhodococcus erythropolis BG43 genes mediating Pseudomonas aeruginosa quinolone signal degradation and virulence factor attenuation.</title>
        <authorList>
            <person name="Mueller C."/>
            <person name="Birmes F.S."/>
            <person name="Rueckert C."/>
            <person name="Kalinowski J."/>
            <person name="Fetzner S."/>
        </authorList>
    </citation>
    <scope>FUNCTION</scope>
    <scope>CATALYTIC ACTIVITY</scope>
    <scope>INDUCTION</scope>
    <source>
        <strain>DSM 46869 / BG43</strain>
    </source>
</reference>
<keyword id="KW-0503">Monooxygenase</keyword>
<keyword id="KW-0520">NAD</keyword>
<keyword id="KW-0560">Oxidoreductase</keyword>
<keyword id="KW-0614">Plasmid</keyword>
<protein>
    <recommendedName>
        <fullName evidence="3">Putative 2-heptyl-3-hydroxy-4(1H)-quinolone synthase AqdB1</fullName>
        <ecNumber evidence="4">1.14.13.182</ecNumber>
    </recommendedName>
    <alternativeName>
        <fullName evidence="3">2-heptyl-4-quinolone monooxygenase</fullName>
        <shortName evidence="3">HHQ monooxygenase</shortName>
    </alternativeName>
</protein>
<proteinExistence type="evidence at protein level"/>
<gene>
    <name evidence="2" type="primary">aqdB1</name>
    <name evidence="5" type="ORF">XU06_29635</name>
</gene>
<evidence type="ECO:0000269" key="1">
    <source>
    </source>
</evidence>
<evidence type="ECO:0000303" key="2">
    <source>
    </source>
</evidence>
<evidence type="ECO:0000305" key="3"/>
<evidence type="ECO:0000305" key="4">
    <source>
    </source>
</evidence>
<evidence type="ECO:0000312" key="5">
    <source>
        <dbReference type="EMBL" id="AKE01129.1"/>
    </source>
</evidence>
<sequence length="381" mass="40799">MSGVAGHAEVVGGGIGGLSAAIALGKRGWTVRLHERNDEIRASGSGIYLWDNGLAALDYLGALDSTLVGAHFGARMQTRDAHNALVASSEVNRAGGPRVVTVARERLINALLASADAVGVEVVTGSTVTRVDAAGRIEFDNGHADADLIVVADGIGSRSRDQLGVKTRRRQLNQKCARVLLPREPGMVPSEWVDEYVTFYSGQRFLLYTPCSADLLYLALVCPSDDAPATGDPLPREAWIASFPQLAPLIDRIGPTPRWDEFEMLTLDSWSSGRVAILGDAAHAQPPSLGQGGGCAMLSALGLAHSLSKNYDLTTALGEWESSERSVIQRTQWFSYWLARANKLPDRPRSLLLSAAGHSSLYRNNRMRAALTTPTGITSSK</sequence>
<geneLocation type="plasmid">
    <name>pRLCBG43</name>
</geneLocation>
<accession>A0A0E4AFG7</accession>
<organism>
    <name type="scientific">Rhodococcus erythropolis</name>
    <name type="common">Arthrobacter picolinophilus</name>
    <dbReference type="NCBI Taxonomy" id="1833"/>
    <lineage>
        <taxon>Bacteria</taxon>
        <taxon>Bacillati</taxon>
        <taxon>Actinomycetota</taxon>
        <taxon>Actinomycetes</taxon>
        <taxon>Mycobacteriales</taxon>
        <taxon>Nocardiaceae</taxon>
        <taxon>Rhodococcus</taxon>
        <taxon>Rhodococcus erythropolis group</taxon>
    </lineage>
</organism>